<organism>
    <name type="scientific">Synechococcus sp. (strain ATCC 27144 / PCC 6301 / SAUG 1402/1)</name>
    <name type="common">Anacystis nidulans</name>
    <dbReference type="NCBI Taxonomy" id="269084"/>
    <lineage>
        <taxon>Bacteria</taxon>
        <taxon>Bacillati</taxon>
        <taxon>Cyanobacteriota</taxon>
        <taxon>Cyanophyceae</taxon>
        <taxon>Synechococcales</taxon>
        <taxon>Synechococcaceae</taxon>
        <taxon>Synechococcus</taxon>
    </lineage>
</organism>
<protein>
    <recommendedName>
        <fullName evidence="1">ATP synthase subunit b</fullName>
    </recommendedName>
    <alternativeName>
        <fullName evidence="1">ATP synthase F(0) sector subunit b</fullName>
    </alternativeName>
    <alternativeName>
        <fullName evidence="1">ATPase subunit I</fullName>
    </alternativeName>
    <alternativeName>
        <fullName evidence="1">F-type ATPase subunit b</fullName>
        <shortName evidence="1">F-ATPase subunit b</shortName>
    </alternativeName>
</protein>
<gene>
    <name evidence="1" type="primary">atpF</name>
    <name type="ordered locus">syc1179_c</name>
</gene>
<proteinExistence type="inferred from homology"/>
<dbReference type="EMBL" id="X05302">
    <property type="protein sequence ID" value="CAA28926.1"/>
    <property type="molecule type" value="Genomic_DNA"/>
</dbReference>
<dbReference type="EMBL" id="AP008231">
    <property type="protein sequence ID" value="BAD79369.1"/>
    <property type="status" value="ALT_INIT"/>
    <property type="molecule type" value="Genomic_DNA"/>
</dbReference>
<dbReference type="PIR" id="S10829">
    <property type="entry name" value="LWYC1"/>
</dbReference>
<dbReference type="RefSeq" id="WP_011377538.1">
    <property type="nucleotide sequence ID" value="NZ_CP085785.1"/>
</dbReference>
<dbReference type="SMR" id="P08447"/>
<dbReference type="KEGG" id="syc:syc1179_c"/>
<dbReference type="eggNOG" id="COG0711">
    <property type="taxonomic scope" value="Bacteria"/>
</dbReference>
<dbReference type="Proteomes" id="UP000001175">
    <property type="component" value="Chromosome"/>
</dbReference>
<dbReference type="GO" id="GO:0031676">
    <property type="term" value="C:plasma membrane-derived thylakoid membrane"/>
    <property type="evidence" value="ECO:0007669"/>
    <property type="project" value="UniProtKB-SubCell"/>
</dbReference>
<dbReference type="GO" id="GO:0045259">
    <property type="term" value="C:proton-transporting ATP synthase complex"/>
    <property type="evidence" value="ECO:0007669"/>
    <property type="project" value="UniProtKB-KW"/>
</dbReference>
<dbReference type="GO" id="GO:0046933">
    <property type="term" value="F:proton-transporting ATP synthase activity, rotational mechanism"/>
    <property type="evidence" value="ECO:0007669"/>
    <property type="project" value="UniProtKB-UniRule"/>
</dbReference>
<dbReference type="CDD" id="cd06503">
    <property type="entry name" value="ATP-synt_Fo_b"/>
    <property type="match status" value="1"/>
</dbReference>
<dbReference type="Gene3D" id="1.20.5.620">
    <property type="entry name" value="F1F0 ATP synthase subunit B, membrane domain"/>
    <property type="match status" value="1"/>
</dbReference>
<dbReference type="HAMAP" id="MF_01398">
    <property type="entry name" value="ATP_synth_b_bprime"/>
    <property type="match status" value="1"/>
</dbReference>
<dbReference type="InterPro" id="IPR028987">
    <property type="entry name" value="ATP_synth_B-like_membr_sf"/>
</dbReference>
<dbReference type="InterPro" id="IPR002146">
    <property type="entry name" value="ATP_synth_b/b'su_bac/chlpt"/>
</dbReference>
<dbReference type="NCBIfam" id="NF005606">
    <property type="entry name" value="PRK07352.1"/>
    <property type="match status" value="1"/>
</dbReference>
<dbReference type="PANTHER" id="PTHR34264">
    <property type="entry name" value="ATP SYNTHASE SUBUNIT B, CHLOROPLASTIC"/>
    <property type="match status" value="1"/>
</dbReference>
<dbReference type="PANTHER" id="PTHR34264:SF3">
    <property type="entry name" value="ATP SYNTHASE SUBUNIT B, CHLOROPLASTIC"/>
    <property type="match status" value="1"/>
</dbReference>
<dbReference type="Pfam" id="PF00430">
    <property type="entry name" value="ATP-synt_B"/>
    <property type="match status" value="1"/>
</dbReference>
<dbReference type="SUPFAM" id="SSF81573">
    <property type="entry name" value="F1F0 ATP synthase subunit B, membrane domain"/>
    <property type="match status" value="1"/>
</dbReference>
<name>ATPF_SYNP6</name>
<evidence type="ECO:0000255" key="1">
    <source>
        <dbReference type="HAMAP-Rule" id="MF_01398"/>
    </source>
</evidence>
<evidence type="ECO:0000305" key="2"/>
<keyword id="KW-0066">ATP synthesis</keyword>
<keyword id="KW-0138">CF(0)</keyword>
<keyword id="KW-0375">Hydrogen ion transport</keyword>
<keyword id="KW-0406">Ion transport</keyword>
<keyword id="KW-0472">Membrane</keyword>
<keyword id="KW-0793">Thylakoid</keyword>
<keyword id="KW-0812">Transmembrane</keyword>
<keyword id="KW-1133">Transmembrane helix</keyword>
<keyword id="KW-0813">Transport</keyword>
<reference key="1">
    <citation type="journal article" date="1987" name="J. Mol. Biol.">
        <title>The organization and sequence of the genes for ATP synthase subunits in the cyanobacterium Synechococcus 6301. Support for an endosymbiotic origin of chloroplasts.</title>
        <authorList>
            <person name="Cozens A.L."/>
            <person name="Walker J.E."/>
        </authorList>
    </citation>
    <scope>NUCLEOTIDE SEQUENCE [GENOMIC DNA]</scope>
</reference>
<reference key="2">
    <citation type="journal article" date="2007" name="Photosyn. Res.">
        <title>Complete nucleotide sequence of the freshwater unicellular cyanobacterium Synechococcus elongatus PCC 6301 chromosome: gene content and organization.</title>
        <authorList>
            <person name="Sugita C."/>
            <person name="Ogata K."/>
            <person name="Shikata M."/>
            <person name="Jikuya H."/>
            <person name="Takano J."/>
            <person name="Furumichi M."/>
            <person name="Kanehisa M."/>
            <person name="Omata T."/>
            <person name="Sugiura M."/>
            <person name="Sugita M."/>
        </authorList>
    </citation>
    <scope>NUCLEOTIDE SEQUENCE [LARGE SCALE GENOMIC DNA]</scope>
    <source>
        <strain>ATCC 27144 / PCC 6301 / SAUG 1402/1</strain>
    </source>
</reference>
<feature type="chain" id="PRO_0000082392" description="ATP synthase subunit b">
    <location>
        <begin position="1"/>
        <end position="171"/>
    </location>
</feature>
<feature type="transmembrane region" description="Helical" evidence="1">
    <location>
        <begin position="26"/>
        <end position="48"/>
    </location>
</feature>
<accession>P08447</accession>
<accession>Q5N2V1</accession>
<sequence length="171" mass="18681">MSSWILLAHAETSGFGLNLDLFETNLINLAIIIGLLVYAGRGFLGNLLSNRRAAIEAEIREVEEKLASSAQALSQAQTQLKEAEAEAARLLVEAKARAAAVRQEILDKAAADVERLKATAAQDVSTEQQRVLDELRRYAVAQALSRVETQLSQQLDEAAQQRLIDRSLATL</sequence>
<comment type="function">
    <text evidence="1">F(1)F(0) ATP synthase produces ATP from ADP in the presence of a proton or sodium gradient. F-type ATPases consist of two structural domains, F(1) containing the extramembraneous catalytic core and F(0) containing the membrane proton channel, linked together by a central stalk and a peripheral stalk. During catalysis, ATP synthesis in the catalytic domain of F(1) is coupled via a rotary mechanism of the central stalk subunits to proton translocation.</text>
</comment>
<comment type="function">
    <text evidence="1">Component of the F(0) channel, it forms part of the peripheral stalk, linking F(1) to F(0).</text>
</comment>
<comment type="subunit">
    <text evidence="1">F-type ATPases have 2 components, F(1) - the catalytic core - and F(0) - the membrane proton channel. F(1) has five subunits: alpha(3), beta(3), gamma(1), delta(1), epsilon(1). F(0) has four main subunits: a(1), b(1), b'(1) and c(10-14). The alpha and beta chains form an alternating ring which encloses part of the gamma chain. F(1) is attached to F(0) by a central stalk formed by the gamma and epsilon chains, while a peripheral stalk is formed by the delta, b and b' chains.</text>
</comment>
<comment type="subcellular location">
    <subcellularLocation>
        <location evidence="1">Cellular thylakoid membrane</location>
        <topology evidence="1">Single-pass membrane protein</topology>
    </subcellularLocation>
</comment>
<comment type="similarity">
    <text evidence="1">Belongs to the ATPase B chain family.</text>
</comment>
<comment type="sequence caution" evidence="2">
    <conflict type="erroneous initiation">
        <sequence resource="EMBL-CDS" id="BAD79369"/>
    </conflict>
</comment>